<organism>
    <name type="scientific">Streptomyces avermitilis (strain ATCC 31267 / DSM 46492 / JCM 5070 / NBRC 14893 / NCIMB 12804 / NRRL 8165 / MA-4680)</name>
    <dbReference type="NCBI Taxonomy" id="227882"/>
    <lineage>
        <taxon>Bacteria</taxon>
        <taxon>Bacillati</taxon>
        <taxon>Actinomycetota</taxon>
        <taxon>Actinomycetes</taxon>
        <taxon>Kitasatosporales</taxon>
        <taxon>Streptomycetaceae</taxon>
        <taxon>Streptomyces</taxon>
    </lineage>
</organism>
<keyword id="KW-0030">Aminoacyl-tRNA synthetase</keyword>
<keyword id="KW-0067">ATP-binding</keyword>
<keyword id="KW-0963">Cytoplasm</keyword>
<keyword id="KW-0436">Ligase</keyword>
<keyword id="KW-0460">Magnesium</keyword>
<keyword id="KW-0479">Metal-binding</keyword>
<keyword id="KW-0547">Nucleotide-binding</keyword>
<keyword id="KW-0648">Protein biosynthesis</keyword>
<keyword id="KW-1185">Reference proteome</keyword>
<keyword id="KW-0694">RNA-binding</keyword>
<keyword id="KW-0820">tRNA-binding</keyword>
<dbReference type="EC" id="6.1.1.20" evidence="1"/>
<dbReference type="EMBL" id="BA000030">
    <property type="protein sequence ID" value="BAC74454.1"/>
    <property type="molecule type" value="Genomic_DNA"/>
</dbReference>
<dbReference type="RefSeq" id="WP_010988142.1">
    <property type="nucleotide sequence ID" value="NZ_JZJK01000082.1"/>
</dbReference>
<dbReference type="SMR" id="Q828C6"/>
<dbReference type="GeneID" id="41543812"/>
<dbReference type="KEGG" id="sma:SAVERM_6743"/>
<dbReference type="eggNOG" id="COG0072">
    <property type="taxonomic scope" value="Bacteria"/>
</dbReference>
<dbReference type="eggNOG" id="COG0073">
    <property type="taxonomic scope" value="Bacteria"/>
</dbReference>
<dbReference type="HOGENOM" id="CLU_016891_0_0_11"/>
<dbReference type="OrthoDB" id="9805455at2"/>
<dbReference type="Proteomes" id="UP000000428">
    <property type="component" value="Chromosome"/>
</dbReference>
<dbReference type="GO" id="GO:0009328">
    <property type="term" value="C:phenylalanine-tRNA ligase complex"/>
    <property type="evidence" value="ECO:0007669"/>
    <property type="project" value="TreeGrafter"/>
</dbReference>
<dbReference type="GO" id="GO:0005524">
    <property type="term" value="F:ATP binding"/>
    <property type="evidence" value="ECO:0007669"/>
    <property type="project" value="UniProtKB-UniRule"/>
</dbReference>
<dbReference type="GO" id="GO:0000287">
    <property type="term" value="F:magnesium ion binding"/>
    <property type="evidence" value="ECO:0007669"/>
    <property type="project" value="UniProtKB-UniRule"/>
</dbReference>
<dbReference type="GO" id="GO:0004826">
    <property type="term" value="F:phenylalanine-tRNA ligase activity"/>
    <property type="evidence" value="ECO:0007669"/>
    <property type="project" value="UniProtKB-UniRule"/>
</dbReference>
<dbReference type="GO" id="GO:0000049">
    <property type="term" value="F:tRNA binding"/>
    <property type="evidence" value="ECO:0007669"/>
    <property type="project" value="UniProtKB-KW"/>
</dbReference>
<dbReference type="GO" id="GO:0006432">
    <property type="term" value="P:phenylalanyl-tRNA aminoacylation"/>
    <property type="evidence" value="ECO:0007669"/>
    <property type="project" value="UniProtKB-UniRule"/>
</dbReference>
<dbReference type="CDD" id="cd00769">
    <property type="entry name" value="PheRS_beta_core"/>
    <property type="match status" value="1"/>
</dbReference>
<dbReference type="CDD" id="cd02796">
    <property type="entry name" value="tRNA_bind_bactPheRS"/>
    <property type="match status" value="1"/>
</dbReference>
<dbReference type="FunFam" id="2.40.50.140:FF:000045">
    <property type="entry name" value="Phenylalanine--tRNA ligase beta subunit"/>
    <property type="match status" value="1"/>
</dbReference>
<dbReference type="FunFam" id="3.30.56.10:FF:000002">
    <property type="entry name" value="Phenylalanine--tRNA ligase beta subunit"/>
    <property type="match status" value="1"/>
</dbReference>
<dbReference type="FunFam" id="3.30.70.380:FF:000001">
    <property type="entry name" value="Phenylalanine--tRNA ligase beta subunit"/>
    <property type="match status" value="1"/>
</dbReference>
<dbReference type="FunFam" id="3.30.930.10:FF:000130">
    <property type="entry name" value="Phenylalanine--tRNA ligase beta subunit"/>
    <property type="match status" value="1"/>
</dbReference>
<dbReference type="FunFam" id="3.50.40.10:FF:000001">
    <property type="entry name" value="Phenylalanine--tRNA ligase beta subunit"/>
    <property type="match status" value="1"/>
</dbReference>
<dbReference type="Gene3D" id="3.30.56.10">
    <property type="match status" value="2"/>
</dbReference>
<dbReference type="Gene3D" id="3.30.930.10">
    <property type="entry name" value="Bira Bifunctional Protein, Domain 2"/>
    <property type="match status" value="1"/>
</dbReference>
<dbReference type="Gene3D" id="3.30.70.380">
    <property type="entry name" value="Ferrodoxin-fold anticodon-binding domain"/>
    <property type="match status" value="1"/>
</dbReference>
<dbReference type="Gene3D" id="2.40.50.140">
    <property type="entry name" value="Nucleic acid-binding proteins"/>
    <property type="match status" value="1"/>
</dbReference>
<dbReference type="Gene3D" id="3.50.40.10">
    <property type="entry name" value="Phenylalanyl-trna Synthetase, Chain B, domain 3"/>
    <property type="match status" value="1"/>
</dbReference>
<dbReference type="HAMAP" id="MF_00283">
    <property type="entry name" value="Phe_tRNA_synth_beta1"/>
    <property type="match status" value="1"/>
</dbReference>
<dbReference type="InterPro" id="IPR045864">
    <property type="entry name" value="aa-tRNA-synth_II/BPL/LPL"/>
</dbReference>
<dbReference type="InterPro" id="IPR005146">
    <property type="entry name" value="B3/B4_tRNA-bd"/>
</dbReference>
<dbReference type="InterPro" id="IPR009061">
    <property type="entry name" value="DNA-bd_dom_put_sf"/>
</dbReference>
<dbReference type="InterPro" id="IPR005121">
    <property type="entry name" value="Fdx_antiC-bd"/>
</dbReference>
<dbReference type="InterPro" id="IPR036690">
    <property type="entry name" value="Fdx_antiC-bd_sf"/>
</dbReference>
<dbReference type="InterPro" id="IPR012340">
    <property type="entry name" value="NA-bd_OB-fold"/>
</dbReference>
<dbReference type="InterPro" id="IPR045060">
    <property type="entry name" value="Phe-tRNA-ligase_IIc_bsu"/>
</dbReference>
<dbReference type="InterPro" id="IPR004532">
    <property type="entry name" value="Phe-tRNA-ligase_IIc_bsu_bact"/>
</dbReference>
<dbReference type="InterPro" id="IPR020825">
    <property type="entry name" value="Phe-tRNA_synthase-like_B3/B4"/>
</dbReference>
<dbReference type="InterPro" id="IPR041616">
    <property type="entry name" value="PheRS_beta_core"/>
</dbReference>
<dbReference type="InterPro" id="IPR002547">
    <property type="entry name" value="tRNA-bd_dom"/>
</dbReference>
<dbReference type="InterPro" id="IPR033714">
    <property type="entry name" value="tRNA_bind_bactPheRS"/>
</dbReference>
<dbReference type="InterPro" id="IPR005147">
    <property type="entry name" value="tRNA_synthase_B5-dom"/>
</dbReference>
<dbReference type="NCBIfam" id="TIGR00472">
    <property type="entry name" value="pheT_bact"/>
    <property type="match status" value="1"/>
</dbReference>
<dbReference type="PANTHER" id="PTHR10947:SF0">
    <property type="entry name" value="PHENYLALANINE--TRNA LIGASE BETA SUBUNIT"/>
    <property type="match status" value="1"/>
</dbReference>
<dbReference type="PANTHER" id="PTHR10947">
    <property type="entry name" value="PHENYLALANYL-TRNA SYNTHETASE BETA CHAIN AND LEUCINE-RICH REPEAT-CONTAINING PROTEIN 47"/>
    <property type="match status" value="1"/>
</dbReference>
<dbReference type="Pfam" id="PF03483">
    <property type="entry name" value="B3_4"/>
    <property type="match status" value="1"/>
</dbReference>
<dbReference type="Pfam" id="PF03484">
    <property type="entry name" value="B5"/>
    <property type="match status" value="1"/>
</dbReference>
<dbReference type="Pfam" id="PF03147">
    <property type="entry name" value="FDX-ACB"/>
    <property type="match status" value="1"/>
</dbReference>
<dbReference type="Pfam" id="PF01588">
    <property type="entry name" value="tRNA_bind"/>
    <property type="match status" value="1"/>
</dbReference>
<dbReference type="Pfam" id="PF17759">
    <property type="entry name" value="tRNA_synthFbeta"/>
    <property type="match status" value="1"/>
</dbReference>
<dbReference type="SMART" id="SM00873">
    <property type="entry name" value="B3_4"/>
    <property type="match status" value="1"/>
</dbReference>
<dbReference type="SMART" id="SM00874">
    <property type="entry name" value="B5"/>
    <property type="match status" value="1"/>
</dbReference>
<dbReference type="SMART" id="SM00896">
    <property type="entry name" value="FDX-ACB"/>
    <property type="match status" value="1"/>
</dbReference>
<dbReference type="SUPFAM" id="SSF54991">
    <property type="entry name" value="Anticodon-binding domain of PheRS"/>
    <property type="match status" value="1"/>
</dbReference>
<dbReference type="SUPFAM" id="SSF55681">
    <property type="entry name" value="Class II aaRS and biotin synthetases"/>
    <property type="match status" value="1"/>
</dbReference>
<dbReference type="SUPFAM" id="SSF50249">
    <property type="entry name" value="Nucleic acid-binding proteins"/>
    <property type="match status" value="1"/>
</dbReference>
<dbReference type="SUPFAM" id="SSF56037">
    <property type="entry name" value="PheT/TilS domain"/>
    <property type="match status" value="1"/>
</dbReference>
<dbReference type="SUPFAM" id="SSF46955">
    <property type="entry name" value="Putative DNA-binding domain"/>
    <property type="match status" value="1"/>
</dbReference>
<dbReference type="PROSITE" id="PS51483">
    <property type="entry name" value="B5"/>
    <property type="match status" value="1"/>
</dbReference>
<dbReference type="PROSITE" id="PS51447">
    <property type="entry name" value="FDX_ACB"/>
    <property type="match status" value="1"/>
</dbReference>
<dbReference type="PROSITE" id="PS50886">
    <property type="entry name" value="TRBD"/>
    <property type="match status" value="1"/>
</dbReference>
<gene>
    <name evidence="1" type="primary">pheT</name>
    <name type="ordered locus">SAV_6743</name>
</gene>
<protein>
    <recommendedName>
        <fullName evidence="1">Phenylalanine--tRNA ligase beta subunit</fullName>
        <ecNumber evidence="1">6.1.1.20</ecNumber>
    </recommendedName>
    <alternativeName>
        <fullName evidence="1">Phenylalanyl-tRNA synthetase beta subunit</fullName>
        <shortName evidence="1">PheRS</shortName>
    </alternativeName>
</protein>
<proteinExistence type="inferred from homology"/>
<reference key="1">
    <citation type="journal article" date="2001" name="Proc. Natl. Acad. Sci. U.S.A.">
        <title>Genome sequence of an industrial microorganism Streptomyces avermitilis: deducing the ability of producing secondary metabolites.</title>
        <authorList>
            <person name="Omura S."/>
            <person name="Ikeda H."/>
            <person name="Ishikawa J."/>
            <person name="Hanamoto A."/>
            <person name="Takahashi C."/>
            <person name="Shinose M."/>
            <person name="Takahashi Y."/>
            <person name="Horikawa H."/>
            <person name="Nakazawa H."/>
            <person name="Osonoe T."/>
            <person name="Kikuchi H."/>
            <person name="Shiba T."/>
            <person name="Sakaki Y."/>
            <person name="Hattori M."/>
        </authorList>
    </citation>
    <scope>NUCLEOTIDE SEQUENCE [LARGE SCALE GENOMIC DNA]</scope>
    <source>
        <strain>ATCC 31267 / DSM 46492 / JCM 5070 / NBRC 14893 / NCIMB 12804 / NRRL 8165 / MA-4680</strain>
    </source>
</reference>
<reference key="2">
    <citation type="journal article" date="2003" name="Nat. Biotechnol.">
        <title>Complete genome sequence and comparative analysis of the industrial microorganism Streptomyces avermitilis.</title>
        <authorList>
            <person name="Ikeda H."/>
            <person name="Ishikawa J."/>
            <person name="Hanamoto A."/>
            <person name="Shinose M."/>
            <person name="Kikuchi H."/>
            <person name="Shiba T."/>
            <person name="Sakaki Y."/>
            <person name="Hattori M."/>
            <person name="Omura S."/>
        </authorList>
    </citation>
    <scope>NUCLEOTIDE SEQUENCE [LARGE SCALE GENOMIC DNA]</scope>
    <source>
        <strain>ATCC 31267 / DSM 46492 / JCM 5070 / NBRC 14893 / NCIMB 12804 / NRRL 8165 / MA-4680</strain>
    </source>
</reference>
<feature type="chain" id="PRO_0000126959" description="Phenylalanine--tRNA ligase beta subunit">
    <location>
        <begin position="1"/>
        <end position="833"/>
    </location>
</feature>
<feature type="domain" description="tRNA-binding" evidence="1">
    <location>
        <begin position="42"/>
        <end position="157"/>
    </location>
</feature>
<feature type="domain" description="B5" evidence="1">
    <location>
        <begin position="411"/>
        <end position="485"/>
    </location>
</feature>
<feature type="domain" description="FDX-ACB" evidence="1">
    <location>
        <begin position="739"/>
        <end position="832"/>
    </location>
</feature>
<feature type="binding site" evidence="1">
    <location>
        <position position="463"/>
    </location>
    <ligand>
        <name>Mg(2+)</name>
        <dbReference type="ChEBI" id="CHEBI:18420"/>
        <note>shared with alpha subunit</note>
    </ligand>
</feature>
<feature type="binding site" evidence="1">
    <location>
        <position position="469"/>
    </location>
    <ligand>
        <name>Mg(2+)</name>
        <dbReference type="ChEBI" id="CHEBI:18420"/>
        <note>shared with alpha subunit</note>
    </ligand>
</feature>
<feature type="binding site" evidence="1">
    <location>
        <position position="472"/>
    </location>
    <ligand>
        <name>Mg(2+)</name>
        <dbReference type="ChEBI" id="CHEBI:18420"/>
        <note>shared with alpha subunit</note>
    </ligand>
</feature>
<feature type="binding site" evidence="1">
    <location>
        <position position="473"/>
    </location>
    <ligand>
        <name>Mg(2+)</name>
        <dbReference type="ChEBI" id="CHEBI:18420"/>
        <note>shared with alpha subunit</note>
    </ligand>
</feature>
<evidence type="ECO:0000255" key="1">
    <source>
        <dbReference type="HAMAP-Rule" id="MF_00283"/>
    </source>
</evidence>
<name>SYFB_STRAW</name>
<comment type="catalytic activity">
    <reaction evidence="1">
        <text>tRNA(Phe) + L-phenylalanine + ATP = L-phenylalanyl-tRNA(Phe) + AMP + diphosphate + H(+)</text>
        <dbReference type="Rhea" id="RHEA:19413"/>
        <dbReference type="Rhea" id="RHEA-COMP:9668"/>
        <dbReference type="Rhea" id="RHEA-COMP:9699"/>
        <dbReference type="ChEBI" id="CHEBI:15378"/>
        <dbReference type="ChEBI" id="CHEBI:30616"/>
        <dbReference type="ChEBI" id="CHEBI:33019"/>
        <dbReference type="ChEBI" id="CHEBI:58095"/>
        <dbReference type="ChEBI" id="CHEBI:78442"/>
        <dbReference type="ChEBI" id="CHEBI:78531"/>
        <dbReference type="ChEBI" id="CHEBI:456215"/>
        <dbReference type="EC" id="6.1.1.20"/>
    </reaction>
</comment>
<comment type="cofactor">
    <cofactor evidence="1">
        <name>Mg(2+)</name>
        <dbReference type="ChEBI" id="CHEBI:18420"/>
    </cofactor>
    <text evidence="1">Binds 2 magnesium ions per tetramer.</text>
</comment>
<comment type="subunit">
    <text evidence="1">Tetramer of two alpha and two beta subunits.</text>
</comment>
<comment type="subcellular location">
    <subcellularLocation>
        <location>Cytoplasm</location>
    </subcellularLocation>
</comment>
<comment type="similarity">
    <text evidence="1">Belongs to the phenylalanyl-tRNA synthetase beta subunit family. Type 1 subfamily.</text>
</comment>
<accession>Q828C6</accession>
<sequence>MRVPLSWLREYVDLPATETGRDVQAKLVSAGLEVERVEQLGADLKGPLAVGQVLTIEELEGFKKPIRFCTVDVGQANGTGEPQEIVCGARNFSVGDKVVVVLPGAVLPGNFAIAARKTYGRTSHGMICSGDELGMGDDGSGGIIVLPPEYEVGTDAIELLELVDEVLDIAVTPDRGYCLSLRGIARETAIAYGLPLRDPALLDVPAPNAFGHPVKISEPLGCDRFTARTVTGLDPEARSPIWLQRRLQKAGMRSISLAVDITNYVMLELGQPLHAYDRSRIQGAIGVRRAEQGEKLTTLDGTQRTLDAEDLVITDDRGPIGLAGVMGGAHTEIDDTEGTTTEVVIEAAHFDPISVARTARRHKLASEASKRFERGVDPLAASAAAQRTVDLLVLLAGGSADAGVTEVITPSAPHTITIPANHPDRVAGVEYGRETVVRRLQEVGCDVYGQDELLVTVPSWRPDLTDPNDLAEEVIRLEGYENLPSTLPKPPAGRGLTERQRLHRRVGRALAGAGYVEAPNYPFIGEHVFDQFGLAADDPKRRVVKLVNPLSEEEPALRTTLLPGLLGALRRNDGRGSHDLALFETGLVFHPRAEQRIAVRLPVDRRPTDEEIASLTAALPEQPRHAAVVLAGAREQAGWWGKGRPADWADAVEAARTLAREAGTELLVRAGQYGPWHPGRCAELAVVLDGEEKVIGYAGELHPGVLKTLGLPARTSAMELNLDALEQASAGVVKGPRISTFPVATQDVALVVDKTVPHADVEAALREGAGELLESIRLFDVYESEQLGAGKKSLAYALRFRAADRTLTVEEASTARDAAVALAAERTGAALRS</sequence>